<proteinExistence type="inferred from homology"/>
<feature type="chain" id="PRO_1000010818" description="Elongation factor P">
    <location>
        <begin position="1"/>
        <end position="189"/>
    </location>
</feature>
<reference key="1">
    <citation type="journal article" date="2009" name="Genome Biol.">
        <title>Genomic and genetic analyses of diversity and plant interactions of Pseudomonas fluorescens.</title>
        <authorList>
            <person name="Silby M.W."/>
            <person name="Cerdeno-Tarraga A.M."/>
            <person name="Vernikos G.S."/>
            <person name="Giddens S.R."/>
            <person name="Jackson R.W."/>
            <person name="Preston G.M."/>
            <person name="Zhang X.-X."/>
            <person name="Moon C.D."/>
            <person name="Gehrig S.M."/>
            <person name="Godfrey S.A.C."/>
            <person name="Knight C.G."/>
            <person name="Malone J.G."/>
            <person name="Robinson Z."/>
            <person name="Spiers A.J."/>
            <person name="Harris S."/>
            <person name="Challis G.L."/>
            <person name="Yaxley A.M."/>
            <person name="Harris D."/>
            <person name="Seeger K."/>
            <person name="Murphy L."/>
            <person name="Rutter S."/>
            <person name="Squares R."/>
            <person name="Quail M.A."/>
            <person name="Saunders E."/>
            <person name="Mavromatis K."/>
            <person name="Brettin T.S."/>
            <person name="Bentley S.D."/>
            <person name="Hothersall J."/>
            <person name="Stephens E."/>
            <person name="Thomas C.M."/>
            <person name="Parkhill J."/>
            <person name="Levy S.B."/>
            <person name="Rainey P.B."/>
            <person name="Thomson N.R."/>
        </authorList>
    </citation>
    <scope>NUCLEOTIDE SEQUENCE [LARGE SCALE GENOMIC DNA]</scope>
    <source>
        <strain>Pf0-1</strain>
    </source>
</reference>
<comment type="function">
    <text evidence="1">Involved in peptide bond synthesis. Stimulates efficient translation and peptide-bond synthesis on native or reconstituted 70S ribosomes in vitro. Probably functions indirectly by altering the affinity of the ribosome for aminoacyl-tRNA, thus increasing their reactivity as acceptors for peptidyl transferase.</text>
</comment>
<comment type="pathway">
    <text evidence="1">Protein biosynthesis; polypeptide chain elongation.</text>
</comment>
<comment type="subcellular location">
    <subcellularLocation>
        <location evidence="1">Cytoplasm</location>
    </subcellularLocation>
</comment>
<comment type="similarity">
    <text evidence="1">Belongs to the elongation factor P family.</text>
</comment>
<keyword id="KW-0963">Cytoplasm</keyword>
<keyword id="KW-0251">Elongation factor</keyword>
<keyword id="KW-0648">Protein biosynthesis</keyword>
<sequence length="189" mass="21010">MKTGKELKPGTVIRIDNDPWLVQKAEFTKSGRNSAIMKTKLKNLLTGYKTETVYGADDKLDDVILDRKEATLSFISGDSYTFMDTTDYTMYELNAEDIESVLPFVEEGMTDVCEAVFFEGRLVSVELPTTIVRQVDYTEGSARGDTSGKVMKPAKLKNGTELSVADFIEIGDMIEIDTREGGSYKGRAK</sequence>
<name>EFP_PSEPF</name>
<protein>
    <recommendedName>
        <fullName evidence="1">Elongation factor P</fullName>
        <shortName evidence="1">EF-P</shortName>
    </recommendedName>
</protein>
<evidence type="ECO:0000255" key="1">
    <source>
        <dbReference type="HAMAP-Rule" id="MF_00141"/>
    </source>
</evidence>
<accession>Q3K918</accession>
<organism>
    <name type="scientific">Pseudomonas fluorescens (strain Pf0-1)</name>
    <dbReference type="NCBI Taxonomy" id="205922"/>
    <lineage>
        <taxon>Bacteria</taxon>
        <taxon>Pseudomonadati</taxon>
        <taxon>Pseudomonadota</taxon>
        <taxon>Gammaproteobacteria</taxon>
        <taxon>Pseudomonadales</taxon>
        <taxon>Pseudomonadaceae</taxon>
        <taxon>Pseudomonas</taxon>
    </lineage>
</organism>
<dbReference type="EMBL" id="CP000094">
    <property type="protein sequence ID" value="ABA75736.1"/>
    <property type="molecule type" value="Genomic_DNA"/>
</dbReference>
<dbReference type="RefSeq" id="WP_007955690.1">
    <property type="nucleotide sequence ID" value="NC_007492.2"/>
</dbReference>
<dbReference type="SMR" id="Q3K918"/>
<dbReference type="KEGG" id="pfo:Pfl01_3999"/>
<dbReference type="eggNOG" id="COG0231">
    <property type="taxonomic scope" value="Bacteria"/>
</dbReference>
<dbReference type="HOGENOM" id="CLU_074944_2_1_6"/>
<dbReference type="UniPathway" id="UPA00345"/>
<dbReference type="Proteomes" id="UP000002704">
    <property type="component" value="Chromosome"/>
</dbReference>
<dbReference type="GO" id="GO:0005737">
    <property type="term" value="C:cytoplasm"/>
    <property type="evidence" value="ECO:0007669"/>
    <property type="project" value="UniProtKB-SubCell"/>
</dbReference>
<dbReference type="GO" id="GO:0003746">
    <property type="term" value="F:translation elongation factor activity"/>
    <property type="evidence" value="ECO:0007669"/>
    <property type="project" value="UniProtKB-UniRule"/>
</dbReference>
<dbReference type="GO" id="GO:0043043">
    <property type="term" value="P:peptide biosynthetic process"/>
    <property type="evidence" value="ECO:0007669"/>
    <property type="project" value="InterPro"/>
</dbReference>
<dbReference type="CDD" id="cd04470">
    <property type="entry name" value="S1_EF-P_repeat_1"/>
    <property type="match status" value="1"/>
</dbReference>
<dbReference type="FunFam" id="2.30.30.30:FF:000003">
    <property type="entry name" value="Elongation factor P"/>
    <property type="match status" value="1"/>
</dbReference>
<dbReference type="FunFam" id="2.40.50.140:FF:000004">
    <property type="entry name" value="Elongation factor P"/>
    <property type="match status" value="1"/>
</dbReference>
<dbReference type="Gene3D" id="2.30.30.30">
    <property type="match status" value="1"/>
</dbReference>
<dbReference type="Gene3D" id="2.40.50.140">
    <property type="entry name" value="Nucleic acid-binding proteins"/>
    <property type="match status" value="2"/>
</dbReference>
<dbReference type="HAMAP" id="MF_00141">
    <property type="entry name" value="EF_P"/>
    <property type="match status" value="1"/>
</dbReference>
<dbReference type="InterPro" id="IPR015365">
    <property type="entry name" value="Elong-fact-P_C"/>
</dbReference>
<dbReference type="InterPro" id="IPR012340">
    <property type="entry name" value="NA-bd_OB-fold"/>
</dbReference>
<dbReference type="InterPro" id="IPR014722">
    <property type="entry name" value="Rib_uL2_dom2"/>
</dbReference>
<dbReference type="InterPro" id="IPR020599">
    <property type="entry name" value="Transl_elong_fac_P/YeiP"/>
</dbReference>
<dbReference type="InterPro" id="IPR013185">
    <property type="entry name" value="Transl_elong_KOW-like"/>
</dbReference>
<dbReference type="InterPro" id="IPR001059">
    <property type="entry name" value="Transl_elong_P/YeiP_cen"/>
</dbReference>
<dbReference type="InterPro" id="IPR011768">
    <property type="entry name" value="Transl_elongation_fac_P"/>
</dbReference>
<dbReference type="InterPro" id="IPR008991">
    <property type="entry name" value="Translation_prot_SH3-like_sf"/>
</dbReference>
<dbReference type="NCBIfam" id="NF001810">
    <property type="entry name" value="PRK00529.1"/>
    <property type="match status" value="1"/>
</dbReference>
<dbReference type="PANTHER" id="PTHR30053">
    <property type="entry name" value="ELONGATION FACTOR P"/>
    <property type="match status" value="1"/>
</dbReference>
<dbReference type="PANTHER" id="PTHR30053:SF12">
    <property type="entry name" value="ELONGATION FACTOR P (EF-P) FAMILY PROTEIN"/>
    <property type="match status" value="1"/>
</dbReference>
<dbReference type="Pfam" id="PF01132">
    <property type="entry name" value="EFP"/>
    <property type="match status" value="1"/>
</dbReference>
<dbReference type="Pfam" id="PF08207">
    <property type="entry name" value="EFP_N"/>
    <property type="match status" value="1"/>
</dbReference>
<dbReference type="Pfam" id="PF09285">
    <property type="entry name" value="Elong-fact-P_C"/>
    <property type="match status" value="1"/>
</dbReference>
<dbReference type="PIRSF" id="PIRSF005901">
    <property type="entry name" value="EF-P"/>
    <property type="match status" value="1"/>
</dbReference>
<dbReference type="SMART" id="SM01185">
    <property type="entry name" value="EFP"/>
    <property type="match status" value="1"/>
</dbReference>
<dbReference type="SMART" id="SM00841">
    <property type="entry name" value="Elong-fact-P_C"/>
    <property type="match status" value="1"/>
</dbReference>
<dbReference type="SUPFAM" id="SSF50249">
    <property type="entry name" value="Nucleic acid-binding proteins"/>
    <property type="match status" value="2"/>
</dbReference>
<dbReference type="SUPFAM" id="SSF50104">
    <property type="entry name" value="Translation proteins SH3-like domain"/>
    <property type="match status" value="1"/>
</dbReference>
<gene>
    <name evidence="1" type="primary">efp</name>
    <name type="ordered locus">Pfl01_3999</name>
</gene>